<protein>
    <recommendedName>
        <fullName>Protein BP4A</fullName>
    </recommendedName>
</protein>
<name>BP4A_BRANA</name>
<dbReference type="EMBL" id="X52874">
    <property type="protein sequence ID" value="CAA37053.1"/>
    <property type="molecule type" value="Genomic_DNA"/>
</dbReference>
<dbReference type="PIR" id="S12241">
    <property type="entry name" value="S12241"/>
</dbReference>
<organism>
    <name type="scientific">Brassica napus</name>
    <name type="common">Rape</name>
    <dbReference type="NCBI Taxonomy" id="3708"/>
    <lineage>
        <taxon>Eukaryota</taxon>
        <taxon>Viridiplantae</taxon>
        <taxon>Streptophyta</taxon>
        <taxon>Embryophyta</taxon>
        <taxon>Tracheophyta</taxon>
        <taxon>Spermatophyta</taxon>
        <taxon>Magnoliopsida</taxon>
        <taxon>eudicotyledons</taxon>
        <taxon>Gunneridae</taxon>
        <taxon>Pentapetalae</taxon>
        <taxon>rosids</taxon>
        <taxon>malvids</taxon>
        <taxon>Brassicales</taxon>
        <taxon>Brassicaceae</taxon>
        <taxon>Brassiceae</taxon>
        <taxon>Brassica</taxon>
    </lineage>
</organism>
<gene>
    <name type="primary">BP4A</name>
</gene>
<feature type="chain" id="PRO_0000064972" description="Protein BP4A">
    <location>
        <begin position="1"/>
        <end position="63"/>
    </location>
</feature>
<sequence>MKKSLQLSFSFLIISIILSHGMMADAQKKNCPHKIPIKGSYCAPTICLDMCKKQHGTVGSCAE</sequence>
<comment type="tissue specificity">
    <text>Pollen specific.</text>
</comment>
<comment type="developmental stage">
    <text>Activated during early microspore development.</text>
</comment>
<reference key="1">
    <citation type="journal article" date="1990" name="Plant Mol. Biol.">
        <title>Characterization of a pollen-specific gene family from Brassica napus which is activated during early microspore development.</title>
        <authorList>
            <person name="Albani D."/>
            <person name="Robert L.S."/>
            <person name="Donaldson P.A."/>
            <person name="Altosaar I."/>
            <person name="Arnison P.G."/>
            <person name="Fabijanski S.F."/>
        </authorList>
    </citation>
    <scope>NUCLEOTIDE SEQUENCE [GENOMIC DNA]</scope>
    <source>
        <strain>cv. Westar</strain>
    </source>
</reference>
<accession>P41505</accession>
<proteinExistence type="evidence at transcript level"/>